<proteinExistence type="inferred from homology"/>
<name>NHAP2_SALPK</name>
<feature type="chain" id="PRO_1000136715" description="K(+)/H(+) antiporter NhaP2">
    <location>
        <begin position="1"/>
        <end position="577"/>
    </location>
</feature>
<feature type="transmembrane region" description="Helical" evidence="1">
    <location>
        <begin position="3"/>
        <end position="23"/>
    </location>
</feature>
<feature type="transmembrane region" description="Helical" evidence="1">
    <location>
        <begin position="30"/>
        <end position="50"/>
    </location>
</feature>
<feature type="transmembrane region" description="Helical" evidence="1">
    <location>
        <begin position="58"/>
        <end position="78"/>
    </location>
</feature>
<feature type="transmembrane region" description="Helical" evidence="1">
    <location>
        <begin position="87"/>
        <end position="107"/>
    </location>
</feature>
<feature type="transmembrane region" description="Helical" evidence="1">
    <location>
        <begin position="109"/>
        <end position="129"/>
    </location>
</feature>
<feature type="transmembrane region" description="Helical" evidence="1">
    <location>
        <begin position="185"/>
        <end position="205"/>
    </location>
</feature>
<feature type="transmembrane region" description="Helical" evidence="1">
    <location>
        <begin position="221"/>
        <end position="241"/>
    </location>
</feature>
<feature type="transmembrane region" description="Helical" evidence="1">
    <location>
        <begin position="271"/>
        <end position="291"/>
    </location>
</feature>
<feature type="transmembrane region" description="Helical" evidence="1">
    <location>
        <begin position="293"/>
        <end position="313"/>
    </location>
</feature>
<feature type="transmembrane region" description="Helical" evidence="1">
    <location>
        <begin position="334"/>
        <end position="354"/>
    </location>
</feature>
<feature type="transmembrane region" description="Helical" evidence="1">
    <location>
        <begin position="363"/>
        <end position="383"/>
    </location>
</feature>
<feature type="domain" description="RCK C-terminal" evidence="1">
    <location>
        <begin position="403"/>
        <end position="485"/>
    </location>
</feature>
<accession>B5BI52</accession>
<evidence type="ECO:0000255" key="1">
    <source>
        <dbReference type="HAMAP-Rule" id="MF_01075"/>
    </source>
</evidence>
<protein>
    <recommendedName>
        <fullName evidence="1">K(+)/H(+) antiporter NhaP2</fullName>
    </recommendedName>
    <alternativeName>
        <fullName evidence="1">Potassium/proton antiporter NhaP2</fullName>
    </alternativeName>
</protein>
<keyword id="KW-0050">Antiport</keyword>
<keyword id="KW-0997">Cell inner membrane</keyword>
<keyword id="KW-1003">Cell membrane</keyword>
<keyword id="KW-0406">Ion transport</keyword>
<keyword id="KW-0472">Membrane</keyword>
<keyword id="KW-0630">Potassium</keyword>
<keyword id="KW-0633">Potassium transport</keyword>
<keyword id="KW-0812">Transmembrane</keyword>
<keyword id="KW-1133">Transmembrane helix</keyword>
<keyword id="KW-0813">Transport</keyword>
<sequence>MDAATIISLFILGSILVTSSILLSSFSSRLGIPILVIFLAIGMLAGVDGIGGIPFDNYPFAYMVSNLALAIILLDGGMRTQASSFRVALGPALSLATLGVLITSGLTGMMAAWLFHLDLIEGLLIGAIVGSTDAAAVFSLLGGKGLNERVGSTLEIESGSNDPMAVFLTITLIEMIQKHETGLDWMFAVHIIQQFGLGIVFGLGGGYLLQQMINRISLPSGLYPMLALSGGILIFALTTALEGSGILAVYLCGFLLGNRPIRNRYGILQNFDGLAWLAQIAMFLVLGLLVTPSDLWPIAVPALILSIWMIFFARPLSVFTGLLPFRGFNLRERIFISWVGLRGAVPIILAVFPMMAGLENARLFFNVAFFVVLVSLLLQGTSLSWAAKRAKVVVPPVGWPVSRVGLDIHPDNPWEQFIYQLSADKWCVGAALRDLHMPNETRIAALFRNNELFHPTGSTRLQEGDVLCVIGRERDLPALGKLFSQSPPVSLDQRFFGDFILEANAKFADVALIYGLEEGTEYRDKQQTLGEIIQQLLGAAPVVGDQVEFGGMIWTVAEKEDNVVRKIGVRVAEDEAE</sequence>
<dbReference type="EMBL" id="FM200053">
    <property type="protein sequence ID" value="CAR59152.1"/>
    <property type="molecule type" value="Genomic_DNA"/>
</dbReference>
<dbReference type="RefSeq" id="WP_000338376.1">
    <property type="nucleotide sequence ID" value="NC_011147.1"/>
</dbReference>
<dbReference type="SMR" id="B5BI52"/>
<dbReference type="KEGG" id="sek:SSPA1001"/>
<dbReference type="HOGENOM" id="CLU_005912_9_2_6"/>
<dbReference type="Proteomes" id="UP000001869">
    <property type="component" value="Chromosome"/>
</dbReference>
<dbReference type="GO" id="GO:0005886">
    <property type="term" value="C:plasma membrane"/>
    <property type="evidence" value="ECO:0007669"/>
    <property type="project" value="UniProtKB-SubCell"/>
</dbReference>
<dbReference type="GO" id="GO:0050660">
    <property type="term" value="F:flavin adenine dinucleotide binding"/>
    <property type="evidence" value="ECO:0007669"/>
    <property type="project" value="InterPro"/>
</dbReference>
<dbReference type="GO" id="GO:0015386">
    <property type="term" value="F:potassium:proton antiporter activity"/>
    <property type="evidence" value="ECO:0007669"/>
    <property type="project" value="UniProtKB-UniRule"/>
</dbReference>
<dbReference type="GO" id="GO:0006884">
    <property type="term" value="P:cell volume homeostasis"/>
    <property type="evidence" value="ECO:0007669"/>
    <property type="project" value="InterPro"/>
</dbReference>
<dbReference type="FunFam" id="1.20.1530.20:FF:000002">
    <property type="entry name" value="K(+)/H(+) antiporter NhaP2"/>
    <property type="match status" value="1"/>
</dbReference>
<dbReference type="Gene3D" id="1.20.1530.20">
    <property type="match status" value="1"/>
</dbReference>
<dbReference type="Gene3D" id="3.30.465.10">
    <property type="match status" value="1"/>
</dbReference>
<dbReference type="Gene3D" id="3.30.70.1450">
    <property type="entry name" value="Regulator of K+ conductance, C-terminal domain"/>
    <property type="match status" value="1"/>
</dbReference>
<dbReference type="HAMAP" id="MF_01075">
    <property type="entry name" value="NhaP2"/>
    <property type="match status" value="1"/>
</dbReference>
<dbReference type="InterPro" id="IPR006153">
    <property type="entry name" value="Cation/H_exchanger_TM"/>
</dbReference>
<dbReference type="InterPro" id="IPR036318">
    <property type="entry name" value="FAD-bd_PCMH-like_sf"/>
</dbReference>
<dbReference type="InterPro" id="IPR016169">
    <property type="entry name" value="FAD-bd_PCMH_sub2"/>
</dbReference>
<dbReference type="InterPro" id="IPR038770">
    <property type="entry name" value="Na+/solute_symporter_sf"/>
</dbReference>
<dbReference type="InterPro" id="IPR023729">
    <property type="entry name" value="NhaP2"/>
</dbReference>
<dbReference type="InterPro" id="IPR006037">
    <property type="entry name" value="RCK_C"/>
</dbReference>
<dbReference type="InterPro" id="IPR036721">
    <property type="entry name" value="RCK_C_sf"/>
</dbReference>
<dbReference type="InterPro" id="IPR005170">
    <property type="entry name" value="Transptr-assoc_dom"/>
</dbReference>
<dbReference type="NCBIfam" id="NF003714">
    <property type="entry name" value="PRK05326.1-1"/>
    <property type="match status" value="1"/>
</dbReference>
<dbReference type="NCBIfam" id="NF003715">
    <property type="entry name" value="PRK05326.1-2"/>
    <property type="match status" value="1"/>
</dbReference>
<dbReference type="NCBIfam" id="NF003716">
    <property type="entry name" value="PRK05326.1-3"/>
    <property type="match status" value="1"/>
</dbReference>
<dbReference type="PANTHER" id="PTHR32507:SF7">
    <property type="entry name" value="K(+)_H(+) ANTIPORTER NHAP2"/>
    <property type="match status" value="1"/>
</dbReference>
<dbReference type="PANTHER" id="PTHR32507">
    <property type="entry name" value="NA(+)/H(+) ANTIPORTER 1"/>
    <property type="match status" value="1"/>
</dbReference>
<dbReference type="Pfam" id="PF03471">
    <property type="entry name" value="CorC_HlyC"/>
    <property type="match status" value="1"/>
</dbReference>
<dbReference type="Pfam" id="PF00999">
    <property type="entry name" value="Na_H_Exchanger"/>
    <property type="match status" value="1"/>
</dbReference>
<dbReference type="Pfam" id="PF02080">
    <property type="entry name" value="TrkA_C"/>
    <property type="match status" value="1"/>
</dbReference>
<dbReference type="SMART" id="SM01091">
    <property type="entry name" value="CorC_HlyC"/>
    <property type="match status" value="1"/>
</dbReference>
<dbReference type="SUPFAM" id="SSF56176">
    <property type="entry name" value="FAD-binding/transporter-associated domain-like"/>
    <property type="match status" value="1"/>
</dbReference>
<dbReference type="SUPFAM" id="SSF116726">
    <property type="entry name" value="TrkA C-terminal domain-like"/>
    <property type="match status" value="1"/>
</dbReference>
<dbReference type="PROSITE" id="PS51202">
    <property type="entry name" value="RCK_C"/>
    <property type="match status" value="1"/>
</dbReference>
<gene>
    <name evidence="1" type="primary">nhaP2</name>
    <name type="synonym">cvrA</name>
    <name type="ordered locus">SSPA1001</name>
</gene>
<comment type="function">
    <text evidence="1">K(+)/H(+) antiporter that extrudes potassium in exchange for external protons and maintains the internal concentration of potassium under toxic levels.</text>
</comment>
<comment type="catalytic activity">
    <reaction evidence="1">
        <text>K(+)(in) + H(+)(out) = K(+)(out) + H(+)(in)</text>
        <dbReference type="Rhea" id="RHEA:29467"/>
        <dbReference type="ChEBI" id="CHEBI:15378"/>
        <dbReference type="ChEBI" id="CHEBI:29103"/>
    </reaction>
    <physiologicalReaction direction="left-to-right" evidence="1">
        <dbReference type="Rhea" id="RHEA:29468"/>
    </physiologicalReaction>
</comment>
<comment type="subcellular location">
    <subcellularLocation>
        <location evidence="1">Cell inner membrane</location>
        <topology evidence="1">Multi-pass membrane protein</topology>
    </subcellularLocation>
</comment>
<comment type="similarity">
    <text evidence="1">Belongs to the monovalent cation:proton antiporter 1 (CPA1) transporter (TC 2.A.36) family. NhaP2 subfamily.</text>
</comment>
<organism>
    <name type="scientific">Salmonella paratyphi A (strain AKU_12601)</name>
    <dbReference type="NCBI Taxonomy" id="554290"/>
    <lineage>
        <taxon>Bacteria</taxon>
        <taxon>Pseudomonadati</taxon>
        <taxon>Pseudomonadota</taxon>
        <taxon>Gammaproteobacteria</taxon>
        <taxon>Enterobacterales</taxon>
        <taxon>Enterobacteriaceae</taxon>
        <taxon>Salmonella</taxon>
    </lineage>
</organism>
<reference key="1">
    <citation type="journal article" date="2009" name="BMC Genomics">
        <title>Pseudogene accumulation in the evolutionary histories of Salmonella enterica serovars Paratyphi A and Typhi.</title>
        <authorList>
            <person name="Holt K.E."/>
            <person name="Thomson N.R."/>
            <person name="Wain J."/>
            <person name="Langridge G.C."/>
            <person name="Hasan R."/>
            <person name="Bhutta Z.A."/>
            <person name="Quail M.A."/>
            <person name="Norbertczak H."/>
            <person name="Walker D."/>
            <person name="Simmonds M."/>
            <person name="White B."/>
            <person name="Bason N."/>
            <person name="Mungall K."/>
            <person name="Dougan G."/>
            <person name="Parkhill J."/>
        </authorList>
    </citation>
    <scope>NUCLEOTIDE SEQUENCE [LARGE SCALE GENOMIC DNA]</scope>
    <source>
        <strain>AKU_12601</strain>
    </source>
</reference>